<organism>
    <name type="scientific">Pisum sativum</name>
    <name type="common">Garden pea</name>
    <name type="synonym">Lathyrus oleraceus</name>
    <dbReference type="NCBI Taxonomy" id="3888"/>
    <lineage>
        <taxon>Eukaryota</taxon>
        <taxon>Viridiplantae</taxon>
        <taxon>Streptophyta</taxon>
        <taxon>Embryophyta</taxon>
        <taxon>Tracheophyta</taxon>
        <taxon>Spermatophyta</taxon>
        <taxon>Magnoliopsida</taxon>
        <taxon>eudicotyledons</taxon>
        <taxon>Gunneridae</taxon>
        <taxon>Pentapetalae</taxon>
        <taxon>rosids</taxon>
        <taxon>fabids</taxon>
        <taxon>Fabales</taxon>
        <taxon>Fabaceae</taxon>
        <taxon>Papilionoideae</taxon>
        <taxon>50 kb inversion clade</taxon>
        <taxon>NPAAA clade</taxon>
        <taxon>Hologalegina</taxon>
        <taxon>IRL clade</taxon>
        <taxon>Fabeae</taxon>
        <taxon>Pisum</taxon>
    </lineage>
</organism>
<comment type="function">
    <text>May be required for the insertion of some integral membrane proteins into the chloroplast thylakoid membrane. May play a role in inhibiting senescence.</text>
</comment>
<comment type="subcellular location">
    <subcellularLocation>
        <location evidence="4">Plastid</location>
        <location evidence="4">Chloroplast thylakoid membrane</location>
        <topology evidence="4">Multi-pass membrane protein</topology>
    </subcellularLocation>
</comment>
<comment type="tissue specificity">
    <text>Highly expressed in apical buds. Low levels of expression in leaves. Not expressed in roots, and stems.</text>
</comment>
<comment type="developmental stage">
    <text>Expressed after flower initiation.</text>
</comment>
<comment type="induction">
    <text>By the plant hormone gibberellin A3. Expression is induced to a greater extent by short day conditions than long day conditions.</text>
</comment>
<comment type="similarity">
    <text evidence="4">Belongs to the OXA1/ALB3/YidC (TC 2.A.9.2) family.</text>
</comment>
<evidence type="ECO:0000255" key="1"/>
<evidence type="ECO:0000256" key="2">
    <source>
        <dbReference type="SAM" id="MobiDB-lite"/>
    </source>
</evidence>
<evidence type="ECO:0000269" key="3">
    <source ref="2"/>
</evidence>
<evidence type="ECO:0000305" key="4"/>
<reference key="1">
    <citation type="journal article" date="1998" name="Gene">
        <title>PPF-1, a post-floral-specific gene expressed in short-day-grown G2 pea, may be important for its never-senescing phenotype.</title>
        <authorList>
            <person name="Zhu Y."/>
            <person name="Zhang Y."/>
            <person name="Luo J."/>
            <person name="Davies P.J."/>
            <person name="Ho D.T.-H."/>
        </authorList>
    </citation>
    <scope>NUCLEOTIDE SEQUENCE [MRNA]</scope>
    <source>
        <strain>cv. G2</strain>
        <tissue>Apical bud</tissue>
    </source>
</reference>
<reference key="2">
    <citation type="submission" date="2000-08" db="EMBL/GenBank/DDBJ databases">
        <title>Cloning and sequencing of the homologous gene of PPF-1 from Alaska pea.</title>
        <authorList>
            <person name="Xu Y."/>
            <person name="Wang M."/>
            <person name="Li Q."/>
            <person name="Ji X."/>
            <person name="Zhu Y."/>
        </authorList>
    </citation>
    <scope>NUCLEOTIDE SEQUENCE [MRNA]</scope>
    <scope>VARIANTS GLY-107; GLY-127; PRO-150; PRO-250 AND 326-GLN-GLN-327 DELINS HIS-LYS</scope>
    <source>
        <strain>cv. Alaska</strain>
    </source>
</reference>
<proteinExistence type="evidence at transcript level"/>
<sequence>MAKTLISSPSFLGTPLPSLHRTFSPNRTRLFTKVQFSFHQLPPIQSVSHSVDLSGIFARAEGLLYTLADATVAADAAASTDVAAQKNGGWFGFISDGMEFVLKVLKDGLSSVHVPYSYGFAIILLTVIVKAATLPLTKQQVESTLAMQNLQPKIKAIQERYAGNQERIQLETSRLYTQAGVNPLAGCLPTLATIPVWIGLYQALSNVANEGLLTEGFLWIPSLGGPTSIAARQSGSGISWLFPFVDGHPLLGWYDTAAYLVLPVLLIVSQYVSMEIMKPPQTNDPNQKNTLLIFKFLPLMIGYFSLSVPSGLTIYWFTNNVLSTAQQVWLRKLGGAKPAVNENAGGIITAGQAKRSASKPEKGGERFRQLKEEEKKKKLIKALPVEEVQPLASASASNDGSDVENNKEQEVTEESNTSKVSQEVQSFSRERRSKRSKRKPVA</sequence>
<protein>
    <recommendedName>
        <fullName>Inner membrane protein PPF-1, chloroplastic</fullName>
    </recommendedName>
    <alternativeName>
        <fullName>Post-floral-specific protein 1</fullName>
    </alternativeName>
</protein>
<name>PPF1_PEA</name>
<dbReference type="EMBL" id="Y12618">
    <property type="protein sequence ID" value="CAA73179.1"/>
    <property type="molecule type" value="mRNA"/>
</dbReference>
<dbReference type="EMBL" id="AJ297606">
    <property type="protein sequence ID" value="CAC04249.1"/>
    <property type="molecule type" value="mRNA"/>
</dbReference>
<dbReference type="PIR" id="T06476">
    <property type="entry name" value="T06476"/>
</dbReference>
<dbReference type="SMR" id="Q9FY06"/>
<dbReference type="GO" id="GO:0009535">
    <property type="term" value="C:chloroplast thylakoid membrane"/>
    <property type="evidence" value="ECO:0007669"/>
    <property type="project" value="UniProtKB-SubCell"/>
</dbReference>
<dbReference type="GO" id="GO:0032977">
    <property type="term" value="F:membrane insertase activity"/>
    <property type="evidence" value="ECO:0007669"/>
    <property type="project" value="InterPro"/>
</dbReference>
<dbReference type="GO" id="GO:0051205">
    <property type="term" value="P:protein insertion into membrane"/>
    <property type="evidence" value="ECO:0007669"/>
    <property type="project" value="TreeGrafter"/>
</dbReference>
<dbReference type="GO" id="GO:0072598">
    <property type="term" value="P:protein localization to chloroplast"/>
    <property type="evidence" value="ECO:0007669"/>
    <property type="project" value="TreeGrafter"/>
</dbReference>
<dbReference type="GO" id="GO:0010027">
    <property type="term" value="P:thylakoid membrane organization"/>
    <property type="evidence" value="ECO:0007669"/>
    <property type="project" value="TreeGrafter"/>
</dbReference>
<dbReference type="CDD" id="cd20070">
    <property type="entry name" value="5TM_YidC_Alb3"/>
    <property type="match status" value="1"/>
</dbReference>
<dbReference type="InterPro" id="IPR001708">
    <property type="entry name" value="YidC/ALB3/OXA1/COX18"/>
</dbReference>
<dbReference type="InterPro" id="IPR028055">
    <property type="entry name" value="YidC/Oxa/ALB_C"/>
</dbReference>
<dbReference type="InterPro" id="IPR047196">
    <property type="entry name" value="YidC_ALB_C"/>
</dbReference>
<dbReference type="NCBIfam" id="TIGR03592">
    <property type="entry name" value="yidC_oxa1_cterm"/>
    <property type="match status" value="1"/>
</dbReference>
<dbReference type="PANTHER" id="PTHR12428:SF47">
    <property type="entry name" value="INNER MEMBRANE PROTEIN ALBINO3, CHLOROPLASTIC"/>
    <property type="match status" value="1"/>
</dbReference>
<dbReference type="PANTHER" id="PTHR12428">
    <property type="entry name" value="OXA1"/>
    <property type="match status" value="1"/>
</dbReference>
<dbReference type="Pfam" id="PF02096">
    <property type="entry name" value="60KD_IMP"/>
    <property type="match status" value="1"/>
</dbReference>
<keyword id="KW-0150">Chloroplast</keyword>
<keyword id="KW-0472">Membrane</keyword>
<keyword id="KW-0934">Plastid</keyword>
<keyword id="KW-0793">Thylakoid</keyword>
<keyword id="KW-0809">Transit peptide</keyword>
<keyword id="KW-0812">Transmembrane</keyword>
<keyword id="KW-1133">Transmembrane helix</keyword>
<accession>Q9FY06</accession>
<accession>O04699</accession>
<gene>
    <name type="primary">PPF-1</name>
</gene>
<feature type="transit peptide" description="Chloroplast" evidence="1">
    <location>
        <begin position="1"/>
        <end status="unknown"/>
    </location>
</feature>
<feature type="chain" id="PRO_0000020370" description="Inner membrane protein PPF-1, chloroplastic">
    <location>
        <begin status="unknown"/>
        <end position="442"/>
    </location>
</feature>
<feature type="topological domain" description="Lumenal" evidence="1">
    <location>
        <begin position="1"/>
        <end position="108"/>
    </location>
</feature>
<feature type="transmembrane region" description="Helical" evidence="1">
    <location>
        <begin position="109"/>
        <end position="129"/>
    </location>
</feature>
<feature type="topological domain" description="Stromal" evidence="1">
    <location>
        <begin position="130"/>
        <end position="183"/>
    </location>
</feature>
<feature type="transmembrane region" description="Helical" evidence="1">
    <location>
        <begin position="184"/>
        <end position="204"/>
    </location>
</feature>
<feature type="topological domain" description="Lumenal" evidence="1">
    <location>
        <begin position="205"/>
        <end position="296"/>
    </location>
</feature>
<feature type="transmembrane region" description="Helical" evidence="1">
    <location>
        <begin position="297"/>
        <end position="317"/>
    </location>
</feature>
<feature type="topological domain" description="Stromal" evidence="1">
    <location>
        <begin position="318"/>
        <end position="442"/>
    </location>
</feature>
<feature type="region of interest" description="Disordered" evidence="2">
    <location>
        <begin position="350"/>
        <end position="371"/>
    </location>
</feature>
<feature type="region of interest" description="Disordered" evidence="2">
    <location>
        <begin position="390"/>
        <end position="442"/>
    </location>
</feature>
<feature type="compositionally biased region" description="Basic and acidic residues" evidence="2">
    <location>
        <begin position="358"/>
        <end position="371"/>
    </location>
</feature>
<feature type="compositionally biased region" description="Polar residues" evidence="2">
    <location>
        <begin position="414"/>
        <end position="427"/>
    </location>
</feature>
<feature type="compositionally biased region" description="Basic residues" evidence="2">
    <location>
        <begin position="431"/>
        <end position="442"/>
    </location>
</feature>
<feature type="sequence variant" description="In strain: cv. Alaska." evidence="3">
    <original>D</original>
    <variation>G</variation>
    <location>
        <position position="107"/>
    </location>
</feature>
<feature type="sequence variant" description="In strain: cv. Alaska." evidence="3">
    <original>V</original>
    <variation>G</variation>
    <location>
        <position position="127"/>
    </location>
</feature>
<feature type="sequence variant" description="In strain: cv. Alaska." evidence="3">
    <original>L</original>
    <variation>P</variation>
    <location>
        <position position="150"/>
    </location>
</feature>
<feature type="sequence variant" description="In strain: cv. Alaska." evidence="3">
    <original>L</original>
    <variation>P</variation>
    <location>
        <position position="250"/>
    </location>
</feature>
<feature type="sequence variant" description="In strain: cv. Alaska." evidence="3">
    <original>QQ</original>
    <variation>HK</variation>
    <location>
        <begin position="326"/>
        <end position="327"/>
    </location>
</feature>